<evidence type="ECO:0000255" key="1">
    <source>
        <dbReference type="HAMAP-Rule" id="MF_00724"/>
    </source>
</evidence>
<gene>
    <name evidence="1" type="primary">fliE</name>
    <name type="ordered locus">ECS88_1990</name>
</gene>
<dbReference type="EMBL" id="CU928161">
    <property type="protein sequence ID" value="CAR03290.1"/>
    <property type="molecule type" value="Genomic_DNA"/>
</dbReference>
<dbReference type="RefSeq" id="WP_001274301.1">
    <property type="nucleotide sequence ID" value="NC_011742.1"/>
</dbReference>
<dbReference type="SMR" id="B7MCJ3"/>
<dbReference type="KEGG" id="ecz:ECS88_1990"/>
<dbReference type="HOGENOM" id="CLU_147249_0_2_6"/>
<dbReference type="Proteomes" id="UP000000747">
    <property type="component" value="Chromosome"/>
</dbReference>
<dbReference type="GO" id="GO:0009425">
    <property type="term" value="C:bacterial-type flagellum basal body"/>
    <property type="evidence" value="ECO:0007669"/>
    <property type="project" value="UniProtKB-SubCell"/>
</dbReference>
<dbReference type="GO" id="GO:0003774">
    <property type="term" value="F:cytoskeletal motor activity"/>
    <property type="evidence" value="ECO:0007669"/>
    <property type="project" value="InterPro"/>
</dbReference>
<dbReference type="GO" id="GO:0005198">
    <property type="term" value="F:structural molecule activity"/>
    <property type="evidence" value="ECO:0007669"/>
    <property type="project" value="InterPro"/>
</dbReference>
<dbReference type="GO" id="GO:0071973">
    <property type="term" value="P:bacterial-type flagellum-dependent cell motility"/>
    <property type="evidence" value="ECO:0007669"/>
    <property type="project" value="InterPro"/>
</dbReference>
<dbReference type="HAMAP" id="MF_00724">
    <property type="entry name" value="FliE"/>
    <property type="match status" value="1"/>
</dbReference>
<dbReference type="InterPro" id="IPR001624">
    <property type="entry name" value="FliE"/>
</dbReference>
<dbReference type="NCBIfam" id="TIGR00205">
    <property type="entry name" value="fliE"/>
    <property type="match status" value="1"/>
</dbReference>
<dbReference type="PANTHER" id="PTHR34653">
    <property type="match status" value="1"/>
</dbReference>
<dbReference type="PANTHER" id="PTHR34653:SF1">
    <property type="entry name" value="FLAGELLAR HOOK-BASAL BODY COMPLEX PROTEIN FLIE"/>
    <property type="match status" value="1"/>
</dbReference>
<dbReference type="Pfam" id="PF02049">
    <property type="entry name" value="FliE"/>
    <property type="match status" value="1"/>
</dbReference>
<dbReference type="PRINTS" id="PR01006">
    <property type="entry name" value="FLGHOOKFLIE"/>
</dbReference>
<protein>
    <recommendedName>
        <fullName evidence="1">Flagellar hook-basal body complex protein FliE</fullName>
    </recommendedName>
</protein>
<name>FLIE_ECO45</name>
<feature type="chain" id="PRO_1000132653" description="Flagellar hook-basal body complex protein FliE">
    <location>
        <begin position="1"/>
        <end position="104"/>
    </location>
</feature>
<sequence length="104" mass="11155">MSAIQGIEGVISQLQATAMSARAQESLPQPTISFAGQLHAALDRISDTQTVARTQAEKFTLGEPGVALNDVMTDMQKASVSMQMGIQVRNKLVAAYQEVMSMQV</sequence>
<keyword id="KW-0975">Bacterial flagellum</keyword>
<keyword id="KW-1185">Reference proteome</keyword>
<comment type="subcellular location">
    <subcellularLocation>
        <location evidence="1">Bacterial flagellum basal body</location>
    </subcellularLocation>
</comment>
<comment type="similarity">
    <text evidence="1">Belongs to the FliE family.</text>
</comment>
<proteinExistence type="inferred from homology"/>
<reference key="1">
    <citation type="journal article" date="2009" name="PLoS Genet.">
        <title>Organised genome dynamics in the Escherichia coli species results in highly diverse adaptive paths.</title>
        <authorList>
            <person name="Touchon M."/>
            <person name="Hoede C."/>
            <person name="Tenaillon O."/>
            <person name="Barbe V."/>
            <person name="Baeriswyl S."/>
            <person name="Bidet P."/>
            <person name="Bingen E."/>
            <person name="Bonacorsi S."/>
            <person name="Bouchier C."/>
            <person name="Bouvet O."/>
            <person name="Calteau A."/>
            <person name="Chiapello H."/>
            <person name="Clermont O."/>
            <person name="Cruveiller S."/>
            <person name="Danchin A."/>
            <person name="Diard M."/>
            <person name="Dossat C."/>
            <person name="Karoui M.E."/>
            <person name="Frapy E."/>
            <person name="Garry L."/>
            <person name="Ghigo J.M."/>
            <person name="Gilles A.M."/>
            <person name="Johnson J."/>
            <person name="Le Bouguenec C."/>
            <person name="Lescat M."/>
            <person name="Mangenot S."/>
            <person name="Martinez-Jehanne V."/>
            <person name="Matic I."/>
            <person name="Nassif X."/>
            <person name="Oztas S."/>
            <person name="Petit M.A."/>
            <person name="Pichon C."/>
            <person name="Rouy Z."/>
            <person name="Ruf C.S."/>
            <person name="Schneider D."/>
            <person name="Tourret J."/>
            <person name="Vacherie B."/>
            <person name="Vallenet D."/>
            <person name="Medigue C."/>
            <person name="Rocha E.P.C."/>
            <person name="Denamur E."/>
        </authorList>
    </citation>
    <scope>NUCLEOTIDE SEQUENCE [LARGE SCALE GENOMIC DNA]</scope>
    <source>
        <strain>S88 / ExPEC</strain>
    </source>
</reference>
<accession>B7MCJ3</accession>
<organism>
    <name type="scientific">Escherichia coli O45:K1 (strain S88 / ExPEC)</name>
    <dbReference type="NCBI Taxonomy" id="585035"/>
    <lineage>
        <taxon>Bacteria</taxon>
        <taxon>Pseudomonadati</taxon>
        <taxon>Pseudomonadota</taxon>
        <taxon>Gammaproteobacteria</taxon>
        <taxon>Enterobacterales</taxon>
        <taxon>Enterobacteriaceae</taxon>
        <taxon>Escherichia</taxon>
    </lineage>
</organism>